<proteinExistence type="inferred from homology"/>
<organism>
    <name type="scientific">Streptococcus pneumoniae (strain P1031)</name>
    <dbReference type="NCBI Taxonomy" id="488223"/>
    <lineage>
        <taxon>Bacteria</taxon>
        <taxon>Bacillati</taxon>
        <taxon>Bacillota</taxon>
        <taxon>Bacilli</taxon>
        <taxon>Lactobacillales</taxon>
        <taxon>Streptococcaceae</taxon>
        <taxon>Streptococcus</taxon>
    </lineage>
</organism>
<dbReference type="EC" id="1.3.1.98" evidence="1"/>
<dbReference type="EMBL" id="CP000920">
    <property type="protein sequence ID" value="ACO20173.1"/>
    <property type="molecule type" value="Genomic_DNA"/>
</dbReference>
<dbReference type="RefSeq" id="WP_000116169.1">
    <property type="nucleotide sequence ID" value="NC_012467.1"/>
</dbReference>
<dbReference type="SMR" id="C1CL98"/>
<dbReference type="GeneID" id="45653351"/>
<dbReference type="KEGG" id="spp:SPP_1409"/>
<dbReference type="HOGENOM" id="CLU_035304_1_1_9"/>
<dbReference type="UniPathway" id="UPA00219"/>
<dbReference type="GO" id="GO:0005829">
    <property type="term" value="C:cytosol"/>
    <property type="evidence" value="ECO:0007669"/>
    <property type="project" value="TreeGrafter"/>
</dbReference>
<dbReference type="GO" id="GO:0071949">
    <property type="term" value="F:FAD binding"/>
    <property type="evidence" value="ECO:0007669"/>
    <property type="project" value="InterPro"/>
</dbReference>
<dbReference type="GO" id="GO:0008762">
    <property type="term" value="F:UDP-N-acetylmuramate dehydrogenase activity"/>
    <property type="evidence" value="ECO:0007669"/>
    <property type="project" value="UniProtKB-UniRule"/>
</dbReference>
<dbReference type="GO" id="GO:0051301">
    <property type="term" value="P:cell division"/>
    <property type="evidence" value="ECO:0007669"/>
    <property type="project" value="UniProtKB-KW"/>
</dbReference>
<dbReference type="GO" id="GO:0071555">
    <property type="term" value="P:cell wall organization"/>
    <property type="evidence" value="ECO:0007669"/>
    <property type="project" value="UniProtKB-KW"/>
</dbReference>
<dbReference type="GO" id="GO:0009252">
    <property type="term" value="P:peptidoglycan biosynthetic process"/>
    <property type="evidence" value="ECO:0007669"/>
    <property type="project" value="UniProtKB-UniRule"/>
</dbReference>
<dbReference type="GO" id="GO:0008360">
    <property type="term" value="P:regulation of cell shape"/>
    <property type="evidence" value="ECO:0007669"/>
    <property type="project" value="UniProtKB-KW"/>
</dbReference>
<dbReference type="Gene3D" id="3.30.465.10">
    <property type="match status" value="1"/>
</dbReference>
<dbReference type="Gene3D" id="3.90.78.10">
    <property type="entry name" value="UDP-N-acetylenolpyruvoylglucosamine reductase, C-terminal domain"/>
    <property type="match status" value="1"/>
</dbReference>
<dbReference type="Gene3D" id="3.30.43.10">
    <property type="entry name" value="Uridine Diphospho-n-acetylenolpyruvylglucosamine Reductase, domain 2"/>
    <property type="match status" value="1"/>
</dbReference>
<dbReference type="HAMAP" id="MF_00037">
    <property type="entry name" value="MurB"/>
    <property type="match status" value="1"/>
</dbReference>
<dbReference type="InterPro" id="IPR016166">
    <property type="entry name" value="FAD-bd_PCMH"/>
</dbReference>
<dbReference type="InterPro" id="IPR036318">
    <property type="entry name" value="FAD-bd_PCMH-like_sf"/>
</dbReference>
<dbReference type="InterPro" id="IPR016167">
    <property type="entry name" value="FAD-bd_PCMH_sub1"/>
</dbReference>
<dbReference type="InterPro" id="IPR016169">
    <property type="entry name" value="FAD-bd_PCMH_sub2"/>
</dbReference>
<dbReference type="InterPro" id="IPR003170">
    <property type="entry name" value="MurB"/>
</dbReference>
<dbReference type="InterPro" id="IPR011601">
    <property type="entry name" value="MurB_C"/>
</dbReference>
<dbReference type="InterPro" id="IPR036635">
    <property type="entry name" value="MurB_C_sf"/>
</dbReference>
<dbReference type="InterPro" id="IPR006094">
    <property type="entry name" value="Oxid_FAD_bind_N"/>
</dbReference>
<dbReference type="NCBIfam" id="TIGR00179">
    <property type="entry name" value="murB"/>
    <property type="match status" value="1"/>
</dbReference>
<dbReference type="NCBIfam" id="NF010480">
    <property type="entry name" value="PRK13905.1"/>
    <property type="match status" value="1"/>
</dbReference>
<dbReference type="PANTHER" id="PTHR21071">
    <property type="entry name" value="UDP-N-ACETYLENOLPYRUVOYLGLUCOSAMINE REDUCTASE"/>
    <property type="match status" value="1"/>
</dbReference>
<dbReference type="PANTHER" id="PTHR21071:SF4">
    <property type="entry name" value="UDP-N-ACETYLENOLPYRUVOYLGLUCOSAMINE REDUCTASE"/>
    <property type="match status" value="1"/>
</dbReference>
<dbReference type="Pfam" id="PF01565">
    <property type="entry name" value="FAD_binding_4"/>
    <property type="match status" value="1"/>
</dbReference>
<dbReference type="Pfam" id="PF02873">
    <property type="entry name" value="MurB_C"/>
    <property type="match status" value="1"/>
</dbReference>
<dbReference type="SUPFAM" id="SSF56176">
    <property type="entry name" value="FAD-binding/transporter-associated domain-like"/>
    <property type="match status" value="1"/>
</dbReference>
<dbReference type="SUPFAM" id="SSF56194">
    <property type="entry name" value="Uridine diphospho-N-Acetylenolpyruvylglucosamine reductase, MurB, C-terminal domain"/>
    <property type="match status" value="1"/>
</dbReference>
<dbReference type="PROSITE" id="PS51387">
    <property type="entry name" value="FAD_PCMH"/>
    <property type="match status" value="1"/>
</dbReference>
<feature type="chain" id="PRO_1000117145" description="UDP-N-acetylenolpyruvoylglucosamine reductase">
    <location>
        <begin position="1"/>
        <end position="301"/>
    </location>
</feature>
<feature type="domain" description="FAD-binding PCMH-type" evidence="1">
    <location>
        <begin position="30"/>
        <end position="194"/>
    </location>
</feature>
<feature type="active site" evidence="1">
    <location>
        <position position="173"/>
    </location>
</feature>
<feature type="active site" description="Proton donor" evidence="1">
    <location>
        <position position="223"/>
    </location>
</feature>
<feature type="active site" evidence="1">
    <location>
        <position position="293"/>
    </location>
</feature>
<keyword id="KW-0131">Cell cycle</keyword>
<keyword id="KW-0132">Cell division</keyword>
<keyword id="KW-0133">Cell shape</keyword>
<keyword id="KW-0961">Cell wall biogenesis/degradation</keyword>
<keyword id="KW-0963">Cytoplasm</keyword>
<keyword id="KW-0274">FAD</keyword>
<keyword id="KW-0285">Flavoprotein</keyword>
<keyword id="KW-0521">NADP</keyword>
<keyword id="KW-0560">Oxidoreductase</keyword>
<keyword id="KW-0573">Peptidoglycan synthesis</keyword>
<name>MURB_STRZP</name>
<sequence length="301" mass="32970">MSVREKMLEILEGIDIRFKEPLHSYSYTKVGGEADYLVFPRNRFELARLVKFANQENIPWMVLGNASNIIVRDGGIRGFVILCDKLNNVSVDGYTIEAEAGANLIETTRIALRHSLTGFEFACGIPGSVGGAVFMNAGAYGGEIAHILQSCKVLTKDGEIETLSAKDLAFGYRHSAIQESGAVVLSVKFALAPGTHQVIKQEMDRLTHLRELKQPLEYPSCGSVFKRPVGHFAGQLISEAGLKGYRIGGVEVSEKHAGFMINVADGTAKDYEDLIQSVIEKVKEHSGITLEREVRILGESK</sequence>
<evidence type="ECO:0000255" key="1">
    <source>
        <dbReference type="HAMAP-Rule" id="MF_00037"/>
    </source>
</evidence>
<reference key="1">
    <citation type="journal article" date="2010" name="Genome Biol.">
        <title>Structure and dynamics of the pan-genome of Streptococcus pneumoniae and closely related species.</title>
        <authorList>
            <person name="Donati C."/>
            <person name="Hiller N.L."/>
            <person name="Tettelin H."/>
            <person name="Muzzi A."/>
            <person name="Croucher N.J."/>
            <person name="Angiuoli S.V."/>
            <person name="Oggioni M."/>
            <person name="Dunning Hotopp J.C."/>
            <person name="Hu F.Z."/>
            <person name="Riley D.R."/>
            <person name="Covacci A."/>
            <person name="Mitchell T.J."/>
            <person name="Bentley S.D."/>
            <person name="Kilian M."/>
            <person name="Ehrlich G.D."/>
            <person name="Rappuoli R."/>
            <person name="Moxon E.R."/>
            <person name="Masignani V."/>
        </authorList>
    </citation>
    <scope>NUCLEOTIDE SEQUENCE [LARGE SCALE GENOMIC DNA]</scope>
    <source>
        <strain>P1031</strain>
    </source>
</reference>
<accession>C1CL98</accession>
<comment type="function">
    <text evidence="1">Cell wall formation.</text>
</comment>
<comment type="catalytic activity">
    <reaction evidence="1">
        <text>UDP-N-acetyl-alpha-D-muramate + NADP(+) = UDP-N-acetyl-3-O-(1-carboxyvinyl)-alpha-D-glucosamine + NADPH + H(+)</text>
        <dbReference type="Rhea" id="RHEA:12248"/>
        <dbReference type="ChEBI" id="CHEBI:15378"/>
        <dbReference type="ChEBI" id="CHEBI:57783"/>
        <dbReference type="ChEBI" id="CHEBI:58349"/>
        <dbReference type="ChEBI" id="CHEBI:68483"/>
        <dbReference type="ChEBI" id="CHEBI:70757"/>
        <dbReference type="EC" id="1.3.1.98"/>
    </reaction>
</comment>
<comment type="cofactor">
    <cofactor evidence="1">
        <name>FAD</name>
        <dbReference type="ChEBI" id="CHEBI:57692"/>
    </cofactor>
</comment>
<comment type="pathway">
    <text evidence="1">Cell wall biogenesis; peptidoglycan biosynthesis.</text>
</comment>
<comment type="subcellular location">
    <subcellularLocation>
        <location evidence="1">Cytoplasm</location>
    </subcellularLocation>
</comment>
<comment type="similarity">
    <text evidence="1">Belongs to the MurB family.</text>
</comment>
<gene>
    <name evidence="1" type="primary">murB</name>
    <name type="ordered locus">SPP_1409</name>
</gene>
<protein>
    <recommendedName>
        <fullName evidence="1">UDP-N-acetylenolpyruvoylglucosamine reductase</fullName>
        <ecNumber evidence="1">1.3.1.98</ecNumber>
    </recommendedName>
    <alternativeName>
        <fullName evidence="1">UDP-N-acetylmuramate dehydrogenase</fullName>
    </alternativeName>
</protein>